<gene>
    <name type="primary">Epc2</name>
</gene>
<protein>
    <recommendedName>
        <fullName>Enhancer of polycomb homolog 2</fullName>
    </recommendedName>
    <alternativeName>
        <fullName>EPC-like</fullName>
    </alternativeName>
</protein>
<proteinExistence type="evidence at transcript level"/>
<comment type="function">
    <text evidence="1">May play a role in transcription or DNA repair.</text>
</comment>
<comment type="subcellular location">
    <subcellularLocation>
        <location evidence="1">Nucleus</location>
    </subcellularLocation>
</comment>
<comment type="similarity">
    <text evidence="4">Belongs to the enhancer of polycomb family.</text>
</comment>
<comment type="sequence caution" evidence="4">
    <conflict type="erroneous initiation">
        <sequence resource="EMBL-CDS" id="BAC33197"/>
    </conflict>
</comment>
<sequence length="808" mass="90960">MSKLSFRARALDAAKPLPIYRGKDMPDLNDCVSINRAVPQMPTGMEKEEESEHHLQRAISAQQVFREKKESMVIPVPEAESNVNYYNRLYKGEFKQPKQFIHIQPFNLDNEQPDYDMDSEDETLLNRLNRKMEIKPLQFEIMIDRLEKASSNQLVTLQEAKLLLNEDDYLIKAVYDYWVRKRKNCRGPSLIPQIKQEKRDGSTNNDPYVAFRRRTEKMQTRKNRKNDEASYEKMLKLRREFSRAITILEMIKRREKTKRELLHLTLEVVEKRYHLGDYGGEILNEVKVNRSEKELYASPATLHNGNHHKVQECKTKHPHHLSLKEEASDVVRQKKKYPKKPKAEAGIAPQQPTPETLPVINKSDIKQYDFQSSDEDEFPQVLSPASEAEEENDPDGSCAFRRRAGCQYYAPRLDQANNHMCENSELADLDKLRYKHCLTTLTVPRRCIGFARRRIGRGGRVIMDRISTEHDPVLKQIDPEMLNGFSSSSQTIDFSSNFSRTNASSKPCENRLSLSEILSNIRSCRLQCFQPRLLNVQDIDSEECTSRKPGQTVSSKRVSAASVALLNTSKNGISVTGGITEEQFQTHQQQLVQMQRQQLAQLHQKQQSQHSSQQTHPKAQGSSTSDCMSKTLDSASAHFAASAVVSAPVPSRSEGSKEQNTGHNNMNGVVQPSGPSKTLYSTNMALSSSPGISAVQLVRTVGHTTTNHLIPALCTSSPQTLPMNNSCLTNAVHLNNVSVVSPVNVHINTRTSAPSPTALKLATVAASMDRVPKVTPSSAISSIARENHEPERLGLNGLAETTVAMEVT</sequence>
<name>EPC2_MOUSE</name>
<evidence type="ECO:0000250" key="1"/>
<evidence type="ECO:0000250" key="2">
    <source>
        <dbReference type="UniProtKB" id="Q52LR7"/>
    </source>
</evidence>
<evidence type="ECO:0000256" key="3">
    <source>
        <dbReference type="SAM" id="MobiDB-lite"/>
    </source>
</evidence>
<evidence type="ECO:0000305" key="4"/>
<feature type="chain" id="PRO_0000239296" description="Enhancer of polycomb homolog 2">
    <location>
        <begin position="1"/>
        <end position="808"/>
    </location>
</feature>
<feature type="region of interest" description="Disordered" evidence="3">
    <location>
        <begin position="337"/>
        <end position="357"/>
    </location>
</feature>
<feature type="region of interest" description="Disordered" evidence="3">
    <location>
        <begin position="371"/>
        <end position="397"/>
    </location>
</feature>
<feature type="region of interest" description="Disordered" evidence="3">
    <location>
        <begin position="595"/>
        <end position="630"/>
    </location>
</feature>
<feature type="region of interest" description="Disordered" evidence="3">
    <location>
        <begin position="645"/>
        <end position="682"/>
    </location>
</feature>
<feature type="compositionally biased region" description="Low complexity" evidence="3">
    <location>
        <begin position="595"/>
        <end position="614"/>
    </location>
</feature>
<feature type="compositionally biased region" description="Polar residues" evidence="3">
    <location>
        <begin position="615"/>
        <end position="630"/>
    </location>
</feature>
<feature type="compositionally biased region" description="Polar residues" evidence="3">
    <location>
        <begin position="658"/>
        <end position="682"/>
    </location>
</feature>
<feature type="modified residue" description="Phosphoserine" evidence="2">
    <location>
        <position position="755"/>
    </location>
</feature>
<feature type="cross-link" description="Glycyl lysine isopeptide (Lys-Gly) (interchain with G-Cter in SUMO2)" evidence="2">
    <location>
        <position position="135"/>
    </location>
</feature>
<feature type="cross-link" description="Glycyl lysine isopeptide (Lys-Gly) (interchain with G-Cter in SUMO2)" evidence="2">
    <location>
        <position position="195"/>
    </location>
</feature>
<feature type="cross-link" description="Glycyl lysine isopeptide (Lys-Gly) (interchain with G-Cter in SUMO2)" evidence="2">
    <location>
        <position position="324"/>
    </location>
</feature>
<feature type="cross-link" description="Glycyl lysine isopeptide (Lys-Gly) (interchain with G-Cter in SUMO2)" evidence="2">
    <location>
        <position position="362"/>
    </location>
</feature>
<feature type="sequence conflict" description="In Ref. 1; BAC33197." evidence="4" ref="1">
    <original>S</original>
    <variation>A</variation>
    <location>
        <position position="5"/>
    </location>
</feature>
<feature type="sequence conflict" description="In Ref. 1; BAE24558." evidence="4" ref="1">
    <original>E</original>
    <variation>K</variation>
    <location>
        <position position="260"/>
    </location>
</feature>
<feature type="sequence conflict" description="In Ref. 3; AAH48785." evidence="4" ref="3">
    <original>L</original>
    <variation>P</variation>
    <location>
        <position position="382"/>
    </location>
</feature>
<feature type="sequence conflict" description="In Ref. 1; BAC27218." evidence="4" ref="1">
    <original>A</original>
    <variation>V</variation>
    <location>
        <position position="451"/>
    </location>
</feature>
<accession>Q8C0I4</accession>
<accession>A2AQU9</accession>
<accession>Q3URX9</accession>
<accession>Q80Y70</accession>
<accession>Q8BXC5</accession>
<reference key="1">
    <citation type="journal article" date="2005" name="Science">
        <title>The transcriptional landscape of the mammalian genome.</title>
        <authorList>
            <person name="Carninci P."/>
            <person name="Kasukawa T."/>
            <person name="Katayama S."/>
            <person name="Gough J."/>
            <person name="Frith M.C."/>
            <person name="Maeda N."/>
            <person name="Oyama R."/>
            <person name="Ravasi T."/>
            <person name="Lenhard B."/>
            <person name="Wells C."/>
            <person name="Kodzius R."/>
            <person name="Shimokawa K."/>
            <person name="Bajic V.B."/>
            <person name="Brenner S.E."/>
            <person name="Batalov S."/>
            <person name="Forrest A.R."/>
            <person name="Zavolan M."/>
            <person name="Davis M.J."/>
            <person name="Wilming L.G."/>
            <person name="Aidinis V."/>
            <person name="Allen J.E."/>
            <person name="Ambesi-Impiombato A."/>
            <person name="Apweiler R."/>
            <person name="Aturaliya R.N."/>
            <person name="Bailey T.L."/>
            <person name="Bansal M."/>
            <person name="Baxter L."/>
            <person name="Beisel K.W."/>
            <person name="Bersano T."/>
            <person name="Bono H."/>
            <person name="Chalk A.M."/>
            <person name="Chiu K.P."/>
            <person name="Choudhary V."/>
            <person name="Christoffels A."/>
            <person name="Clutterbuck D.R."/>
            <person name="Crowe M.L."/>
            <person name="Dalla E."/>
            <person name="Dalrymple B.P."/>
            <person name="de Bono B."/>
            <person name="Della Gatta G."/>
            <person name="di Bernardo D."/>
            <person name="Down T."/>
            <person name="Engstrom P."/>
            <person name="Fagiolini M."/>
            <person name="Faulkner G."/>
            <person name="Fletcher C.F."/>
            <person name="Fukushima T."/>
            <person name="Furuno M."/>
            <person name="Futaki S."/>
            <person name="Gariboldi M."/>
            <person name="Georgii-Hemming P."/>
            <person name="Gingeras T.R."/>
            <person name="Gojobori T."/>
            <person name="Green R.E."/>
            <person name="Gustincich S."/>
            <person name="Harbers M."/>
            <person name="Hayashi Y."/>
            <person name="Hensch T.K."/>
            <person name="Hirokawa N."/>
            <person name="Hill D."/>
            <person name="Huminiecki L."/>
            <person name="Iacono M."/>
            <person name="Ikeo K."/>
            <person name="Iwama A."/>
            <person name="Ishikawa T."/>
            <person name="Jakt M."/>
            <person name="Kanapin A."/>
            <person name="Katoh M."/>
            <person name="Kawasawa Y."/>
            <person name="Kelso J."/>
            <person name="Kitamura H."/>
            <person name="Kitano H."/>
            <person name="Kollias G."/>
            <person name="Krishnan S.P."/>
            <person name="Kruger A."/>
            <person name="Kummerfeld S.K."/>
            <person name="Kurochkin I.V."/>
            <person name="Lareau L.F."/>
            <person name="Lazarevic D."/>
            <person name="Lipovich L."/>
            <person name="Liu J."/>
            <person name="Liuni S."/>
            <person name="McWilliam S."/>
            <person name="Madan Babu M."/>
            <person name="Madera M."/>
            <person name="Marchionni L."/>
            <person name="Matsuda H."/>
            <person name="Matsuzawa S."/>
            <person name="Miki H."/>
            <person name="Mignone F."/>
            <person name="Miyake S."/>
            <person name="Morris K."/>
            <person name="Mottagui-Tabar S."/>
            <person name="Mulder N."/>
            <person name="Nakano N."/>
            <person name="Nakauchi H."/>
            <person name="Ng P."/>
            <person name="Nilsson R."/>
            <person name="Nishiguchi S."/>
            <person name="Nishikawa S."/>
            <person name="Nori F."/>
            <person name="Ohara O."/>
            <person name="Okazaki Y."/>
            <person name="Orlando V."/>
            <person name="Pang K.C."/>
            <person name="Pavan W.J."/>
            <person name="Pavesi G."/>
            <person name="Pesole G."/>
            <person name="Petrovsky N."/>
            <person name="Piazza S."/>
            <person name="Reed J."/>
            <person name="Reid J.F."/>
            <person name="Ring B.Z."/>
            <person name="Ringwald M."/>
            <person name="Rost B."/>
            <person name="Ruan Y."/>
            <person name="Salzberg S.L."/>
            <person name="Sandelin A."/>
            <person name="Schneider C."/>
            <person name="Schoenbach C."/>
            <person name="Sekiguchi K."/>
            <person name="Semple C.A."/>
            <person name="Seno S."/>
            <person name="Sessa L."/>
            <person name="Sheng Y."/>
            <person name="Shibata Y."/>
            <person name="Shimada H."/>
            <person name="Shimada K."/>
            <person name="Silva D."/>
            <person name="Sinclair B."/>
            <person name="Sperling S."/>
            <person name="Stupka E."/>
            <person name="Sugiura K."/>
            <person name="Sultana R."/>
            <person name="Takenaka Y."/>
            <person name="Taki K."/>
            <person name="Tammoja K."/>
            <person name="Tan S.L."/>
            <person name="Tang S."/>
            <person name="Taylor M.S."/>
            <person name="Tegner J."/>
            <person name="Teichmann S.A."/>
            <person name="Ueda H.R."/>
            <person name="van Nimwegen E."/>
            <person name="Verardo R."/>
            <person name="Wei C.L."/>
            <person name="Yagi K."/>
            <person name="Yamanishi H."/>
            <person name="Zabarovsky E."/>
            <person name="Zhu S."/>
            <person name="Zimmer A."/>
            <person name="Hide W."/>
            <person name="Bult C."/>
            <person name="Grimmond S.M."/>
            <person name="Teasdale R.D."/>
            <person name="Liu E.T."/>
            <person name="Brusic V."/>
            <person name="Quackenbush J."/>
            <person name="Wahlestedt C."/>
            <person name="Mattick J.S."/>
            <person name="Hume D.A."/>
            <person name="Kai C."/>
            <person name="Sasaki D."/>
            <person name="Tomaru Y."/>
            <person name="Fukuda S."/>
            <person name="Kanamori-Katayama M."/>
            <person name="Suzuki M."/>
            <person name="Aoki J."/>
            <person name="Arakawa T."/>
            <person name="Iida J."/>
            <person name="Imamura K."/>
            <person name="Itoh M."/>
            <person name="Kato T."/>
            <person name="Kawaji H."/>
            <person name="Kawagashira N."/>
            <person name="Kawashima T."/>
            <person name="Kojima M."/>
            <person name="Kondo S."/>
            <person name="Konno H."/>
            <person name="Nakano K."/>
            <person name="Ninomiya N."/>
            <person name="Nishio T."/>
            <person name="Okada M."/>
            <person name="Plessy C."/>
            <person name="Shibata K."/>
            <person name="Shiraki T."/>
            <person name="Suzuki S."/>
            <person name="Tagami M."/>
            <person name="Waki K."/>
            <person name="Watahiki A."/>
            <person name="Okamura-Oho Y."/>
            <person name="Suzuki H."/>
            <person name="Kawai J."/>
            <person name="Hayashizaki Y."/>
        </authorList>
    </citation>
    <scope>NUCLEOTIDE SEQUENCE [LARGE SCALE MRNA]</scope>
    <source>
        <strain>C57BL/6J</strain>
        <tissue>Cerebellum</tissue>
        <tissue>Head</tissue>
        <tissue>Thymus</tissue>
    </source>
</reference>
<reference key="2">
    <citation type="journal article" date="2009" name="PLoS Biol.">
        <title>Lineage-specific biology revealed by a finished genome assembly of the mouse.</title>
        <authorList>
            <person name="Church D.M."/>
            <person name="Goodstadt L."/>
            <person name="Hillier L.W."/>
            <person name="Zody M.C."/>
            <person name="Goldstein S."/>
            <person name="She X."/>
            <person name="Bult C.J."/>
            <person name="Agarwala R."/>
            <person name="Cherry J.L."/>
            <person name="DiCuccio M."/>
            <person name="Hlavina W."/>
            <person name="Kapustin Y."/>
            <person name="Meric P."/>
            <person name="Maglott D."/>
            <person name="Birtle Z."/>
            <person name="Marques A.C."/>
            <person name="Graves T."/>
            <person name="Zhou S."/>
            <person name="Teague B."/>
            <person name="Potamousis K."/>
            <person name="Churas C."/>
            <person name="Place M."/>
            <person name="Herschleb J."/>
            <person name="Runnheim R."/>
            <person name="Forrest D."/>
            <person name="Amos-Landgraf J."/>
            <person name="Schwartz D.C."/>
            <person name="Cheng Z."/>
            <person name="Lindblad-Toh K."/>
            <person name="Eichler E.E."/>
            <person name="Ponting C.P."/>
        </authorList>
    </citation>
    <scope>NUCLEOTIDE SEQUENCE [LARGE SCALE GENOMIC DNA]</scope>
    <source>
        <strain>C57BL/6J</strain>
    </source>
</reference>
<reference key="3">
    <citation type="journal article" date="2004" name="Genome Res.">
        <title>The status, quality, and expansion of the NIH full-length cDNA project: the Mammalian Gene Collection (MGC).</title>
        <authorList>
            <consortium name="The MGC Project Team"/>
        </authorList>
    </citation>
    <scope>NUCLEOTIDE SEQUENCE [LARGE SCALE MRNA] OF 82-808</scope>
    <source>
        <strain>FVB/N</strain>
        <tissue>Colon</tissue>
    </source>
</reference>
<organism>
    <name type="scientific">Mus musculus</name>
    <name type="common">Mouse</name>
    <dbReference type="NCBI Taxonomy" id="10090"/>
    <lineage>
        <taxon>Eukaryota</taxon>
        <taxon>Metazoa</taxon>
        <taxon>Chordata</taxon>
        <taxon>Craniata</taxon>
        <taxon>Vertebrata</taxon>
        <taxon>Euteleostomi</taxon>
        <taxon>Mammalia</taxon>
        <taxon>Eutheria</taxon>
        <taxon>Euarchontoglires</taxon>
        <taxon>Glires</taxon>
        <taxon>Rodentia</taxon>
        <taxon>Myomorpha</taxon>
        <taxon>Muroidea</taxon>
        <taxon>Muridae</taxon>
        <taxon>Murinae</taxon>
        <taxon>Mus</taxon>
        <taxon>Mus</taxon>
    </lineage>
</organism>
<keyword id="KW-0156">Chromatin regulator</keyword>
<keyword id="KW-0227">DNA damage</keyword>
<keyword id="KW-0234">DNA repair</keyword>
<keyword id="KW-1017">Isopeptide bond</keyword>
<keyword id="KW-0539">Nucleus</keyword>
<keyword id="KW-0597">Phosphoprotein</keyword>
<keyword id="KW-1185">Reference proteome</keyword>
<keyword id="KW-0804">Transcription</keyword>
<keyword id="KW-0805">Transcription regulation</keyword>
<keyword id="KW-0832">Ubl conjugation</keyword>
<dbReference type="EMBL" id="AK031025">
    <property type="protein sequence ID" value="BAC27218.1"/>
    <property type="molecule type" value="mRNA"/>
</dbReference>
<dbReference type="EMBL" id="AK047947">
    <property type="protein sequence ID" value="BAC33197.1"/>
    <property type="status" value="ALT_INIT"/>
    <property type="molecule type" value="mRNA"/>
</dbReference>
<dbReference type="EMBL" id="AK141073">
    <property type="protein sequence ID" value="BAE24558.1"/>
    <property type="molecule type" value="mRNA"/>
</dbReference>
<dbReference type="EMBL" id="AL845163">
    <property type="status" value="NOT_ANNOTATED_CDS"/>
    <property type="molecule type" value="Genomic_DNA"/>
</dbReference>
<dbReference type="EMBL" id="BC048785">
    <property type="protein sequence ID" value="AAH48785.1"/>
    <property type="molecule type" value="mRNA"/>
</dbReference>
<dbReference type="CCDS" id="CCDS16023.1"/>
<dbReference type="RefSeq" id="NP_766251.3">
    <property type="nucleotide sequence ID" value="NM_172663.4"/>
</dbReference>
<dbReference type="BioGRID" id="230690">
    <property type="interactions" value="2"/>
</dbReference>
<dbReference type="ComplexPortal" id="CPX-990">
    <property type="entry name" value="NuA4 histone acetyltransferase complex"/>
</dbReference>
<dbReference type="FunCoup" id="Q8C0I4">
    <property type="interactions" value="2510"/>
</dbReference>
<dbReference type="IntAct" id="Q8C0I4">
    <property type="interactions" value="4"/>
</dbReference>
<dbReference type="MINT" id="Q8C0I4"/>
<dbReference type="STRING" id="10090.ENSMUSP00000089758"/>
<dbReference type="GlyGen" id="Q8C0I4">
    <property type="glycosylation" value="2 sites, 1 O-linked glycan (1 site)"/>
</dbReference>
<dbReference type="iPTMnet" id="Q8C0I4"/>
<dbReference type="PhosphoSitePlus" id="Q8C0I4"/>
<dbReference type="PaxDb" id="10090-ENSMUSP00000089758"/>
<dbReference type="PeptideAtlas" id="Q8C0I4"/>
<dbReference type="ProteomicsDB" id="275527"/>
<dbReference type="Pumba" id="Q8C0I4"/>
<dbReference type="Antibodypedia" id="51789">
    <property type="antibodies" value="59 antibodies from 13 providers"/>
</dbReference>
<dbReference type="DNASU" id="227867"/>
<dbReference type="Ensembl" id="ENSMUST00000092123.11">
    <property type="protein sequence ID" value="ENSMUSP00000089758.5"/>
    <property type="gene ID" value="ENSMUSG00000069495.13"/>
</dbReference>
<dbReference type="GeneID" id="227867"/>
<dbReference type="KEGG" id="mmu:227867"/>
<dbReference type="UCSC" id="uc008jpw.2">
    <property type="organism name" value="mouse"/>
</dbReference>
<dbReference type="AGR" id="MGI:1278321"/>
<dbReference type="CTD" id="26122"/>
<dbReference type="MGI" id="MGI:1278321">
    <property type="gene designation" value="Epc2"/>
</dbReference>
<dbReference type="VEuPathDB" id="HostDB:ENSMUSG00000069495"/>
<dbReference type="eggNOG" id="KOG2261">
    <property type="taxonomic scope" value="Eukaryota"/>
</dbReference>
<dbReference type="GeneTree" id="ENSGT00940000158526"/>
<dbReference type="HOGENOM" id="CLU_012781_0_0_1"/>
<dbReference type="InParanoid" id="Q8C0I4"/>
<dbReference type="OMA" id="DQANHTC"/>
<dbReference type="OrthoDB" id="435275at2759"/>
<dbReference type="PhylomeDB" id="Q8C0I4"/>
<dbReference type="TreeFam" id="TF106438"/>
<dbReference type="BioGRID-ORCS" id="227867">
    <property type="hits" value="19 hits in 120 CRISPR screens"/>
</dbReference>
<dbReference type="PRO" id="PR:Q8C0I4"/>
<dbReference type="Proteomes" id="UP000000589">
    <property type="component" value="Chromosome 2"/>
</dbReference>
<dbReference type="RNAct" id="Q8C0I4">
    <property type="molecule type" value="protein"/>
</dbReference>
<dbReference type="Bgee" id="ENSMUSG00000069495">
    <property type="expression patterns" value="Expressed in manus and 223 other cell types or tissues"/>
</dbReference>
<dbReference type="ExpressionAtlas" id="Q8C0I4">
    <property type="expression patterns" value="baseline and differential"/>
</dbReference>
<dbReference type="GO" id="GO:0035267">
    <property type="term" value="C:NuA4 histone acetyltransferase complex"/>
    <property type="evidence" value="ECO:0000266"/>
    <property type="project" value="ComplexPortal"/>
</dbReference>
<dbReference type="GO" id="GO:0000786">
    <property type="term" value="C:nucleosome"/>
    <property type="evidence" value="ECO:0000266"/>
    <property type="project" value="ComplexPortal"/>
</dbReference>
<dbReference type="GO" id="GO:0005634">
    <property type="term" value="C:nucleus"/>
    <property type="evidence" value="ECO:0007669"/>
    <property type="project" value="UniProtKB-SubCell"/>
</dbReference>
<dbReference type="GO" id="GO:0006325">
    <property type="term" value="P:chromatin organization"/>
    <property type="evidence" value="ECO:0007669"/>
    <property type="project" value="UniProtKB-KW"/>
</dbReference>
<dbReference type="GO" id="GO:0006281">
    <property type="term" value="P:DNA repair"/>
    <property type="evidence" value="ECO:0007669"/>
    <property type="project" value="UniProtKB-KW"/>
</dbReference>
<dbReference type="GO" id="GO:0045893">
    <property type="term" value="P:positive regulation of DNA-templated transcription"/>
    <property type="evidence" value="ECO:0000303"/>
    <property type="project" value="ComplexPortal"/>
</dbReference>
<dbReference type="GO" id="GO:1905168">
    <property type="term" value="P:positive regulation of double-strand break repair via homologous recombination"/>
    <property type="evidence" value="ECO:0000266"/>
    <property type="project" value="ComplexPortal"/>
</dbReference>
<dbReference type="GO" id="GO:0042981">
    <property type="term" value="P:regulation of apoptotic process"/>
    <property type="evidence" value="ECO:0000303"/>
    <property type="project" value="ComplexPortal"/>
</dbReference>
<dbReference type="GO" id="GO:0051726">
    <property type="term" value="P:regulation of cell cycle"/>
    <property type="evidence" value="ECO:0000266"/>
    <property type="project" value="ComplexPortal"/>
</dbReference>
<dbReference type="GO" id="GO:2000779">
    <property type="term" value="P:regulation of double-strand break repair"/>
    <property type="evidence" value="ECO:0000303"/>
    <property type="project" value="ComplexPortal"/>
</dbReference>
<dbReference type="GO" id="GO:0006357">
    <property type="term" value="P:regulation of transcription by RNA polymerase II"/>
    <property type="evidence" value="ECO:0007669"/>
    <property type="project" value="InterPro"/>
</dbReference>
<dbReference type="InterPro" id="IPR024943">
    <property type="entry name" value="Enhancer_polycomb"/>
</dbReference>
<dbReference type="InterPro" id="IPR019542">
    <property type="entry name" value="Enhancer_polycomb-like_N"/>
</dbReference>
<dbReference type="InterPro" id="IPR009607">
    <property type="entry name" value="Enhancer_polycomb_C"/>
</dbReference>
<dbReference type="PANTHER" id="PTHR14898">
    <property type="entry name" value="ENHANCER OF POLYCOMB"/>
    <property type="match status" value="1"/>
</dbReference>
<dbReference type="Pfam" id="PF06752">
    <property type="entry name" value="E_Pc_C"/>
    <property type="match status" value="1"/>
</dbReference>
<dbReference type="Pfam" id="PF10513">
    <property type="entry name" value="EPL1"/>
    <property type="match status" value="1"/>
</dbReference>